<name>YL723_MIMIV</name>
<keyword id="KW-1185">Reference proteome</keyword>
<protein>
    <recommendedName>
        <fullName>Uncharacterized protein L723</fullName>
    </recommendedName>
</protein>
<organism>
    <name type="scientific">Acanthamoeba polyphaga mimivirus</name>
    <name type="common">APMV</name>
    <dbReference type="NCBI Taxonomy" id="212035"/>
    <lineage>
        <taxon>Viruses</taxon>
        <taxon>Varidnaviria</taxon>
        <taxon>Bamfordvirae</taxon>
        <taxon>Nucleocytoviricota</taxon>
        <taxon>Megaviricetes</taxon>
        <taxon>Imitervirales</taxon>
        <taxon>Mimiviridae</taxon>
        <taxon>Megamimivirinae</taxon>
        <taxon>Mimivirus</taxon>
        <taxon>Mimivirus bradfordmassiliense</taxon>
    </lineage>
</organism>
<organismHost>
    <name type="scientific">Acanthamoeba polyphaga</name>
    <name type="common">Amoeba</name>
    <dbReference type="NCBI Taxonomy" id="5757"/>
</organismHost>
<gene>
    <name type="ordered locus">MIMI_L723</name>
</gene>
<feature type="chain" id="PRO_0000071335" description="Uncharacterized protein L723">
    <location>
        <begin position="1"/>
        <end position="222"/>
    </location>
</feature>
<proteinExistence type="predicted"/>
<reference key="1">
    <citation type="journal article" date="2004" name="Science">
        <title>The 1.2-megabase genome sequence of Mimivirus.</title>
        <authorList>
            <person name="Raoult D."/>
            <person name="Audic S."/>
            <person name="Robert C."/>
            <person name="Abergel C."/>
            <person name="Renesto P."/>
            <person name="Ogata H."/>
            <person name="La Scola B."/>
            <person name="Susan M."/>
            <person name="Claverie J.-M."/>
        </authorList>
    </citation>
    <scope>NUCLEOTIDE SEQUENCE [LARGE SCALE GENOMIC DNA]</scope>
    <source>
        <strain>Rowbotham-Bradford</strain>
    </source>
</reference>
<sequence length="222" mass="25836">MSKITEIVDIDNDEEEYAKQAYIVEGDDLDFPRATINPKLQKLQSLVTEFITSVILKHEKEYYHLVLKMYKENAEYLLGTTQNTIISTICTLTKTFYNKLYHSFQKNDLNNGSVKFIQEMVSYADYGPHILLDKLFRITIDIHIDIIREELIVDETVEKPFDVYYDSLSIQLNKKLVSYNLLNALSKNDDDNDSQFVIVPDNHEVFDINIDKPLGKPTNQNQ</sequence>
<dbReference type="EMBL" id="AY653733">
    <property type="protein sequence ID" value="AAV50983.1"/>
    <property type="molecule type" value="Genomic_DNA"/>
</dbReference>
<dbReference type="KEGG" id="vg:9925377"/>
<dbReference type="OrthoDB" id="21156at10239"/>
<dbReference type="Proteomes" id="UP000001134">
    <property type="component" value="Genome"/>
</dbReference>
<accession>Q5UNX7</accession>